<organism>
    <name type="scientific">Homo sapiens</name>
    <name type="common">Human</name>
    <dbReference type="NCBI Taxonomy" id="9606"/>
    <lineage>
        <taxon>Eukaryota</taxon>
        <taxon>Metazoa</taxon>
        <taxon>Chordata</taxon>
        <taxon>Craniata</taxon>
        <taxon>Vertebrata</taxon>
        <taxon>Euteleostomi</taxon>
        <taxon>Mammalia</taxon>
        <taxon>Eutheria</taxon>
        <taxon>Euarchontoglires</taxon>
        <taxon>Primates</taxon>
        <taxon>Haplorrhini</taxon>
        <taxon>Catarrhini</taxon>
        <taxon>Hominidae</taxon>
        <taxon>Homo</taxon>
    </lineage>
</organism>
<feature type="chain" id="PRO_0000051759" description="Cytochrome P450 2F1">
    <location>
        <begin position="1"/>
        <end position="491"/>
    </location>
</feature>
<feature type="binding site" description="axial binding residue" evidence="1">
    <location>
        <position position="436"/>
    </location>
    <ligand>
        <name>heme</name>
        <dbReference type="ChEBI" id="CHEBI:30413"/>
    </ligand>
    <ligandPart>
        <name>Fe</name>
        <dbReference type="ChEBI" id="CHEBI:18248"/>
    </ligandPart>
</feature>
<feature type="splice variant" id="VSP_055575" description="In isoform 2." evidence="7">
    <original>VSTTLHHAFLALMKYPKV</original>
    <variation>PACRRRSTSWWDARGCRR</variation>
    <location>
        <begin position="303"/>
        <end position="320"/>
    </location>
</feature>
<feature type="splice variant" id="VSP_055576" description="In isoform 2." evidence="7">
    <location>
        <begin position="321"/>
        <end position="491"/>
    </location>
</feature>
<feature type="sequence variant" id="VAR_058863" description="In allele CYP2F1*4; dbSNP:rs58285195.">
    <original>S</original>
    <variation>P</variation>
    <location>
        <position position="38"/>
    </location>
</feature>
<feature type="sequence variant" id="VAR_058864" description="In allele CYP2F1*6; dbSNP:rs57670668.">
    <original>R</original>
    <variation>P</variation>
    <location>
        <position position="98"/>
    </location>
</feature>
<feature type="sequence variant" id="VAR_058865" description="In allele CYP2F1*3 and in allele CYP2F1*4; dbSNP:rs305974.">
    <original>D</original>
    <variation>N</variation>
    <location>
        <position position="218"/>
    </location>
</feature>
<feature type="sequence variant" id="VAR_058866" description="In allele CYP2F1*3; dbSNP:rs75405062." evidence="3">
    <original>Q</original>
    <variation>H</variation>
    <location>
        <position position="266"/>
    </location>
</feature>
<feature type="sequence variant" id="VAR_058867" description="In allele CYP2F1*5A and in allele CYP2F1*5B; dbSNP:rs144315434.">
    <original>L</original>
    <variation>P</variation>
    <location>
        <position position="391"/>
    </location>
</feature>
<feature type="sequence variant" id="VAR_058868" description="In allele CYP2F1*3; dbSNP:rs7246981.">
    <original>P</original>
    <variation>L</variation>
    <location>
        <position position="490"/>
    </location>
</feature>
<feature type="sequence conflict" description="In Ref. 1; AAA52156." evidence="8" ref="1">
    <original>EL</original>
    <variation>DV</variation>
    <location>
        <begin position="156"/>
        <end position="157"/>
    </location>
</feature>
<feature type="sequence conflict" description="In Ref. 1; AAA52156 and 2; AAL69652." evidence="8" ref="1 2">
    <original>I</original>
    <variation>ILDPR</variation>
    <location>
        <position position="219"/>
    </location>
</feature>
<feature type="sequence conflict" description="In Ref. 1; AAA52156." evidence="8" ref="1">
    <location>
        <begin position="256"/>
        <end position="259"/>
    </location>
</feature>
<feature type="sequence conflict" description="In Ref. 1; AAA52156." evidence="8" ref="1">
    <original>S</original>
    <variation>L</variation>
    <location>
        <position position="440"/>
    </location>
</feature>
<protein>
    <recommendedName>
        <fullName>Cytochrome P450 2F1</fullName>
        <ecNumber evidence="2 4 5">1.14.14.1</ecNumber>
    </recommendedName>
    <alternativeName>
        <fullName>CYPIIF1</fullName>
    </alternativeName>
</protein>
<name>CP2F1_HUMAN</name>
<comment type="function">
    <text evidence="4">May be involved in the metabolism of various pneumotoxicants including naphthalene. Is able to dealkylate ethoxycoumarin, propoxycoumarin, and pentoxyresorufin but possesses no activity toward ethoxyresorufin and only trace dearylation activity toward benzyloxyresorufin. Bioactivates 3-methylindole (3MI) by dehydrogenation to the putative electrophile 3-methylene-indolenine.</text>
</comment>
<comment type="catalytic activity">
    <reaction evidence="2 4 5">
        <text>an organic molecule + reduced [NADPH--hemoprotein reductase] + O2 = an alcohol + oxidized [NADPH--hemoprotein reductase] + H2O + H(+)</text>
        <dbReference type="Rhea" id="RHEA:17149"/>
        <dbReference type="Rhea" id="RHEA-COMP:11964"/>
        <dbReference type="Rhea" id="RHEA-COMP:11965"/>
        <dbReference type="ChEBI" id="CHEBI:15377"/>
        <dbReference type="ChEBI" id="CHEBI:15378"/>
        <dbReference type="ChEBI" id="CHEBI:15379"/>
        <dbReference type="ChEBI" id="CHEBI:30879"/>
        <dbReference type="ChEBI" id="CHEBI:57618"/>
        <dbReference type="ChEBI" id="CHEBI:58210"/>
        <dbReference type="ChEBI" id="CHEBI:142491"/>
        <dbReference type="EC" id="1.14.14.1"/>
    </reaction>
</comment>
<comment type="cofactor">
    <cofactor evidence="1">
        <name>heme</name>
        <dbReference type="ChEBI" id="CHEBI:30413"/>
    </cofactor>
</comment>
<comment type="biophysicochemical properties">
    <kinetics>
        <KM evidence="2 4">0.018 mM for 3-methylindole</KM>
        <Vmax evidence="2 4">51.2 pmol/min/mg enzyme toward ethoxy-coumarin</Vmax>
        <Vmax evidence="2 4">24.3 pmol/min/mg enzyme toward propoxy-coumarin</Vmax>
        <Vmax evidence="2 4">22.0 pmol/min/mg enzyme toward pentoxy-resorufin</Vmax>
        <Vmax evidence="2 4">2.29 pmol/min/mg enzyme toward benzyloxy-resorufin</Vmax>
    </kinetics>
</comment>
<comment type="subcellular location">
    <subcellularLocation>
        <location evidence="9">Endoplasmic reticulum membrane</location>
        <topology evidence="9">Peripheral membrane protein</topology>
    </subcellularLocation>
    <subcellularLocation>
        <location evidence="2">Microsome membrane</location>
        <topology evidence="2">Peripheral membrane protein</topology>
    </subcellularLocation>
</comment>
<comment type="alternative products">
    <event type="alternative splicing"/>
    <isoform>
        <id>P24903-1</id>
        <name>1</name>
        <sequence type="displayed"/>
    </isoform>
    <isoform>
        <id>P24903-2</id>
        <name>2</name>
        <sequence type="described" ref="VSP_055575 VSP_055576"/>
    </isoform>
</comment>
<comment type="tissue specificity">
    <text evidence="4 6">Expressed in lung. Rarely detected in liver and placenta.</text>
</comment>
<comment type="polymorphism">
    <text>Eight non disease-associated alleles are known: CYP2F1*1, CYP2F1*2A, CYP2F1*2B, CYP2F1*3, CYP2F1*4, CYP2F1*5A, CYP2F1*5B and CYP2F1*6. The sequence shown corresponds to allele CYP2F1*1.</text>
</comment>
<comment type="similarity">
    <text evidence="8">Belongs to the cytochrome P450 family.</text>
</comment>
<comment type="online information" name="PharmVar Pharmacogen Variation Consortium">
    <link uri="https://www.pharmvar.org/gene/CYP2F1"/>
    <text>CYP2F1 alleles</text>
</comment>
<gene>
    <name type="primary">CYP2F1</name>
</gene>
<reference key="1">
    <citation type="journal article" date="1990" name="Biochemistry">
        <title>The human CYP2F gene subfamily: identification of a cDNA encoding a new cytochrome P450, cDNA-directed expression, and chromosome mapping.</title>
        <authorList>
            <person name="Nhamburo P.T."/>
            <person name="Kimura S."/>
            <person name="McBride O.W."/>
            <person name="Kozak C.A."/>
            <person name="Gelboin H.V."/>
            <person name="Gonzalez F.J."/>
        </authorList>
    </citation>
    <scope>NUCLEOTIDE SEQUENCE [MRNA] (ISOFORM 1)</scope>
    <scope>FUNCTION</scope>
    <scope>CATALYTIC ACTIVITY</scope>
    <scope>BIOPHYSICOCHEMICAL PROPERTIES</scope>
    <scope>TISSUE SPECIFICITY</scope>
    <source>
        <tissue>Lung</tissue>
    </source>
</reference>
<reference key="2">
    <citation type="journal article" date="2002" name="Mutat. Res.">
        <title>Identification and cross-species comparisons of CYP2F subfamily genes in mammals.</title>
        <authorList>
            <person name="Chen N."/>
            <person name="Whitehead S.E."/>
            <person name="Caillat A.W."/>
            <person name="Gavit K."/>
            <person name="Isphording D.R."/>
            <person name="Kovacevic D."/>
            <person name="McCreary M.B."/>
            <person name="Hoffman S.M.G."/>
        </authorList>
    </citation>
    <scope>NUCLEOTIDE SEQUENCE [GENOMIC DNA]</scope>
    <scope>VARIANT HIS-266</scope>
</reference>
<reference key="3">
    <citation type="journal article" date="2007" name="Mutat. Res.">
        <title>Molecular analysis of the CYP2F1 gene: identification of a frequent non-functional allelic variant.</title>
        <authorList>
            <person name="Tournel G."/>
            <person name="Cauffiez C."/>
            <person name="Billaut-Laden I."/>
            <person name="Allorge D."/>
            <person name="Chevalier D."/>
            <person name="Bonnifet F."/>
            <person name="Mensier E."/>
            <person name="Lafitte J.-J."/>
            <person name="Lhermitte M."/>
            <person name="Broly F."/>
            <person name="Lo-Guidice J.-M."/>
        </authorList>
    </citation>
    <scope>NUCLEOTIDE SEQUENCE [GENOMIC DNA] (ALLELES CYP2F1*1; CYP2F1*2A; CYP2F1*2B; CYP2F1*3; CYP2F1*4; CYP2F1*5A; CYP2F1*5B AND CYP2F1*6)</scope>
</reference>
<reference key="4">
    <citation type="journal article" date="2004" name="Nature">
        <title>The DNA sequence and biology of human chromosome 19.</title>
        <authorList>
            <person name="Grimwood J."/>
            <person name="Gordon L.A."/>
            <person name="Olsen A.S."/>
            <person name="Terry A."/>
            <person name="Schmutz J."/>
            <person name="Lamerdin J.E."/>
            <person name="Hellsten U."/>
            <person name="Goodstein D."/>
            <person name="Couronne O."/>
            <person name="Tran-Gyamfi M."/>
            <person name="Aerts A."/>
            <person name="Altherr M."/>
            <person name="Ashworth L."/>
            <person name="Bajorek E."/>
            <person name="Black S."/>
            <person name="Branscomb E."/>
            <person name="Caenepeel S."/>
            <person name="Carrano A.V."/>
            <person name="Caoile C."/>
            <person name="Chan Y.M."/>
            <person name="Christensen M."/>
            <person name="Cleland C.A."/>
            <person name="Copeland A."/>
            <person name="Dalin E."/>
            <person name="Dehal P."/>
            <person name="Denys M."/>
            <person name="Detter J.C."/>
            <person name="Escobar J."/>
            <person name="Flowers D."/>
            <person name="Fotopulos D."/>
            <person name="Garcia C."/>
            <person name="Georgescu A.M."/>
            <person name="Glavina T."/>
            <person name="Gomez M."/>
            <person name="Gonzales E."/>
            <person name="Groza M."/>
            <person name="Hammon N."/>
            <person name="Hawkins T."/>
            <person name="Haydu L."/>
            <person name="Ho I."/>
            <person name="Huang W."/>
            <person name="Israni S."/>
            <person name="Jett J."/>
            <person name="Kadner K."/>
            <person name="Kimball H."/>
            <person name="Kobayashi A."/>
            <person name="Larionov V."/>
            <person name="Leem S.-H."/>
            <person name="Lopez F."/>
            <person name="Lou Y."/>
            <person name="Lowry S."/>
            <person name="Malfatti S."/>
            <person name="Martinez D."/>
            <person name="McCready P.M."/>
            <person name="Medina C."/>
            <person name="Morgan J."/>
            <person name="Nelson K."/>
            <person name="Nolan M."/>
            <person name="Ovcharenko I."/>
            <person name="Pitluck S."/>
            <person name="Pollard M."/>
            <person name="Popkie A.P."/>
            <person name="Predki P."/>
            <person name="Quan G."/>
            <person name="Ramirez L."/>
            <person name="Rash S."/>
            <person name="Retterer J."/>
            <person name="Rodriguez A."/>
            <person name="Rogers S."/>
            <person name="Salamov A."/>
            <person name="Salazar A."/>
            <person name="She X."/>
            <person name="Smith D."/>
            <person name="Slezak T."/>
            <person name="Solovyev V."/>
            <person name="Thayer N."/>
            <person name="Tice H."/>
            <person name="Tsai M."/>
            <person name="Ustaszewska A."/>
            <person name="Vo N."/>
            <person name="Wagner M."/>
            <person name="Wheeler J."/>
            <person name="Wu K."/>
            <person name="Xie G."/>
            <person name="Yang J."/>
            <person name="Dubchak I."/>
            <person name="Furey T.S."/>
            <person name="DeJong P."/>
            <person name="Dickson M."/>
            <person name="Gordon D."/>
            <person name="Eichler E.E."/>
            <person name="Pennacchio L.A."/>
            <person name="Richardson P."/>
            <person name="Stubbs L."/>
            <person name="Rokhsar D.S."/>
            <person name="Myers R.M."/>
            <person name="Rubin E.M."/>
            <person name="Lucas S.M."/>
        </authorList>
    </citation>
    <scope>NUCLEOTIDE SEQUENCE [LARGE SCALE GENOMIC DNA]</scope>
</reference>
<reference key="5">
    <citation type="journal article" date="2004" name="Genome Res.">
        <title>The status, quality, and expansion of the NIH full-length cDNA project: the Mammalian Gene Collection (MGC).</title>
        <authorList>
            <consortium name="The MGC Project Team"/>
        </authorList>
    </citation>
    <scope>NUCLEOTIDE SEQUENCE [LARGE SCALE MRNA] (ISOFORM 2)</scope>
</reference>
<reference key="6">
    <citation type="journal article" date="1996" name="Biochem. Pharmacol.">
        <title>Expression of xenobiotic-metabolizing cytochrome P450 forms in human full-term placenta.</title>
        <authorList>
            <person name="Hakkola J."/>
            <person name="Pasanen M."/>
            <person name="Hukkanen J."/>
            <person name="Pelkonen O."/>
            <person name="Maeenpaeae J."/>
            <person name="Edwards R.J."/>
            <person name="Boobis A.R."/>
            <person name="Raunio H."/>
        </authorList>
    </citation>
    <scope>TISSUE SPECIFICITY</scope>
</reference>
<reference key="7">
    <citation type="journal article" date="1996" name="J. Pharmacol. Exp. Ther.">
        <title>Metabolism of 3-methylindole by vaccinia-expressed P450 enzymes: correlation of 3-methyleneindolenine formation and protein-binding.</title>
        <authorList>
            <person name="Thornton-Manning J."/>
            <person name="Appleton M.L."/>
            <person name="Gonzalez F.J."/>
            <person name="Yost G.S."/>
        </authorList>
    </citation>
    <scope>CATALYTIC ACTIVITY</scope>
</reference>
<reference key="8">
    <citation type="journal article" date="1999" name="Drug Metab. Dispos.">
        <title>Specific dehydrogenation of 3-methylindole and epoxidation of naphthalene by recombinant human CYP2F1 expressed in lymphoblastoid cells.</title>
        <authorList>
            <person name="Lanza D.L."/>
            <person name="Code E."/>
            <person name="Crespi C.L."/>
            <person name="Gonzalez F.J."/>
            <person name="Yost G.S."/>
        </authorList>
    </citation>
    <scope>CATALYTIC ACTIVITY</scope>
    <scope>BIOPHYSICOCHEMICAL PROPERTIES</scope>
    <scope>SUBCELLULAR LOCATION</scope>
</reference>
<dbReference type="EC" id="1.14.14.1" evidence="2 4 5"/>
<dbReference type="EMBL" id="J02906">
    <property type="protein sequence ID" value="AAA52156.1"/>
    <property type="molecule type" value="mRNA"/>
</dbReference>
<dbReference type="EMBL" id="AF372573">
    <property type="protein sequence ID" value="AAL69652.1"/>
    <property type="molecule type" value="Genomic_DNA"/>
</dbReference>
<dbReference type="EMBL" id="AF372570">
    <property type="protein sequence ID" value="AAL69652.1"/>
    <property type="status" value="JOINED"/>
    <property type="molecule type" value="Genomic_DNA"/>
</dbReference>
<dbReference type="EMBL" id="AF372571">
    <property type="protein sequence ID" value="AAL69652.1"/>
    <property type="status" value="JOINED"/>
    <property type="molecule type" value="Genomic_DNA"/>
</dbReference>
<dbReference type="EMBL" id="AF372572">
    <property type="protein sequence ID" value="AAL69652.1"/>
    <property type="status" value="JOINED"/>
    <property type="molecule type" value="Genomic_DNA"/>
</dbReference>
<dbReference type="EMBL" id="EF122241">
    <property type="protein sequence ID" value="ABO41976.1"/>
    <property type="molecule type" value="Genomic_DNA"/>
</dbReference>
<dbReference type="EMBL" id="EF122242">
    <property type="protein sequence ID" value="ABO41977.1"/>
    <property type="molecule type" value="Genomic_DNA"/>
</dbReference>
<dbReference type="EMBL" id="EF122243">
    <property type="protein sequence ID" value="ABO41978.1"/>
    <property type="molecule type" value="Genomic_DNA"/>
</dbReference>
<dbReference type="EMBL" id="EF122244">
    <property type="protein sequence ID" value="ABO41979.1"/>
    <property type="molecule type" value="Genomic_DNA"/>
</dbReference>
<dbReference type="EMBL" id="EF122245">
    <property type="protein sequence ID" value="ABO41980.1"/>
    <property type="molecule type" value="Genomic_DNA"/>
</dbReference>
<dbReference type="EMBL" id="AC008962">
    <property type="status" value="NOT_ANNOTATED_CDS"/>
    <property type="molecule type" value="Genomic_DNA"/>
</dbReference>
<dbReference type="EMBL" id="BC109056">
    <property type="protein sequence ID" value="AAI09057.1"/>
    <property type="molecule type" value="mRNA"/>
</dbReference>
<dbReference type="CCDS" id="CCDS12572.1">
    <molecule id="P24903-1"/>
</dbReference>
<dbReference type="PIR" id="A36036">
    <property type="entry name" value="A36036"/>
</dbReference>
<dbReference type="PIR" id="B36036">
    <property type="entry name" value="B36036"/>
</dbReference>
<dbReference type="RefSeq" id="NP_000765.2">
    <molecule id="P24903-1"/>
    <property type="nucleotide sequence ID" value="NM_000774.4"/>
</dbReference>
<dbReference type="RefSeq" id="XP_047294238.1">
    <molecule id="P24903-2"/>
    <property type="nucleotide sequence ID" value="XM_047438282.1"/>
</dbReference>
<dbReference type="RefSeq" id="XP_054175993.1">
    <molecule id="P24903-2"/>
    <property type="nucleotide sequence ID" value="XM_054320018.1"/>
</dbReference>
<dbReference type="SMR" id="P24903"/>
<dbReference type="FunCoup" id="P24903">
    <property type="interactions" value="232"/>
</dbReference>
<dbReference type="IntAct" id="P24903">
    <property type="interactions" value="1"/>
</dbReference>
<dbReference type="MINT" id="P24903"/>
<dbReference type="STRING" id="9606.ENSP00000333534"/>
<dbReference type="BindingDB" id="P24903"/>
<dbReference type="ChEMBL" id="CHEMBL4523986"/>
<dbReference type="iPTMnet" id="P24903"/>
<dbReference type="PhosphoSitePlus" id="P24903"/>
<dbReference type="BioMuta" id="CYP2F1"/>
<dbReference type="DMDM" id="259016202"/>
<dbReference type="jPOST" id="P24903"/>
<dbReference type="MassIVE" id="P24903"/>
<dbReference type="PaxDb" id="9606-ENSP00000333534"/>
<dbReference type="PeptideAtlas" id="P24903"/>
<dbReference type="ProteomicsDB" id="54239">
    <molecule id="P24903-1"/>
</dbReference>
<dbReference type="Antibodypedia" id="30699">
    <property type="antibodies" value="110 antibodies from 26 providers"/>
</dbReference>
<dbReference type="DNASU" id="1572"/>
<dbReference type="Ensembl" id="ENST00000331105.7">
    <molecule id="P24903-1"/>
    <property type="protein sequence ID" value="ENSP00000333534.2"/>
    <property type="gene ID" value="ENSG00000197446.9"/>
</dbReference>
<dbReference type="Ensembl" id="ENST00000532164.2">
    <molecule id="P24903-2"/>
    <property type="protein sequence ID" value="ENSP00000471416.1"/>
    <property type="gene ID" value="ENSG00000197446.9"/>
</dbReference>
<dbReference type="GeneID" id="1572"/>
<dbReference type="KEGG" id="hsa:1572"/>
<dbReference type="MANE-Select" id="ENST00000331105.7">
    <property type="protein sequence ID" value="ENSP00000333534.2"/>
    <property type="RefSeq nucleotide sequence ID" value="NM_000774.5"/>
    <property type="RefSeq protein sequence ID" value="NP_000765.2"/>
</dbReference>
<dbReference type="UCSC" id="uc002opu.2">
    <molecule id="P24903-1"/>
    <property type="organism name" value="human"/>
</dbReference>
<dbReference type="AGR" id="HGNC:2632"/>
<dbReference type="CTD" id="1572"/>
<dbReference type="DisGeNET" id="1572"/>
<dbReference type="GeneCards" id="CYP2F1"/>
<dbReference type="HGNC" id="HGNC:2632">
    <property type="gene designation" value="CYP2F1"/>
</dbReference>
<dbReference type="HPA" id="ENSG00000197446">
    <property type="expression patterns" value="Tissue enhanced (lung, salivary gland, testis)"/>
</dbReference>
<dbReference type="MIM" id="124070">
    <property type="type" value="gene"/>
</dbReference>
<dbReference type="neXtProt" id="NX_P24903"/>
<dbReference type="OpenTargets" id="ENSG00000197446"/>
<dbReference type="PharmGKB" id="PA27109"/>
<dbReference type="VEuPathDB" id="HostDB:ENSG00000197446"/>
<dbReference type="eggNOG" id="KOG0156">
    <property type="taxonomic scope" value="Eukaryota"/>
</dbReference>
<dbReference type="GeneTree" id="ENSGT00940000162522"/>
<dbReference type="HOGENOM" id="CLU_001570_22_3_1"/>
<dbReference type="InParanoid" id="P24903"/>
<dbReference type="OMA" id="YVNAFIA"/>
<dbReference type="OrthoDB" id="1055148at2759"/>
<dbReference type="PAN-GO" id="P24903">
    <property type="GO annotations" value="8 GO annotations based on evolutionary models"/>
</dbReference>
<dbReference type="PhylomeDB" id="P24903"/>
<dbReference type="TreeFam" id="TF352043"/>
<dbReference type="PathwayCommons" id="P24903"/>
<dbReference type="Reactome" id="R-HSA-211935">
    <property type="pathway name" value="Fatty acids"/>
</dbReference>
<dbReference type="Reactome" id="R-HSA-211981">
    <property type="pathway name" value="Xenobiotics"/>
</dbReference>
<dbReference type="Reactome" id="R-HSA-211999">
    <property type="pathway name" value="CYP2E1 reactions"/>
</dbReference>
<dbReference type="SABIO-RK" id="P24903"/>
<dbReference type="SignaLink" id="P24903"/>
<dbReference type="BioGRID-ORCS" id="1572">
    <property type="hits" value="10 hits in 1153 CRISPR screens"/>
</dbReference>
<dbReference type="GeneWiki" id="CYP2F1"/>
<dbReference type="GenomeRNAi" id="1572"/>
<dbReference type="Pharos" id="P24903">
    <property type="development level" value="Tbio"/>
</dbReference>
<dbReference type="PRO" id="PR:P24903"/>
<dbReference type="Proteomes" id="UP000005640">
    <property type="component" value="Chromosome 19"/>
</dbReference>
<dbReference type="RNAct" id="P24903">
    <property type="molecule type" value="protein"/>
</dbReference>
<dbReference type="Bgee" id="ENSG00000197446">
    <property type="expression patterns" value="Expressed in olfactory segment of nasal mucosa and 75 other cell types or tissues"/>
</dbReference>
<dbReference type="ExpressionAtlas" id="P24903">
    <property type="expression patterns" value="baseline and differential"/>
</dbReference>
<dbReference type="GO" id="GO:0005737">
    <property type="term" value="C:cytoplasm"/>
    <property type="evidence" value="ECO:0000318"/>
    <property type="project" value="GO_Central"/>
</dbReference>
<dbReference type="GO" id="GO:0005789">
    <property type="term" value="C:endoplasmic reticulum membrane"/>
    <property type="evidence" value="ECO:0000304"/>
    <property type="project" value="Reactome"/>
</dbReference>
<dbReference type="GO" id="GO:0043231">
    <property type="term" value="C:intracellular membrane-bounded organelle"/>
    <property type="evidence" value="ECO:0000314"/>
    <property type="project" value="UniProtKB"/>
</dbReference>
<dbReference type="GO" id="GO:0008392">
    <property type="term" value="F:arachidonate epoxygenase activity"/>
    <property type="evidence" value="ECO:0000318"/>
    <property type="project" value="GO_Central"/>
</dbReference>
<dbReference type="GO" id="GO:0020037">
    <property type="term" value="F:heme binding"/>
    <property type="evidence" value="ECO:0000318"/>
    <property type="project" value="GO_Central"/>
</dbReference>
<dbReference type="GO" id="GO:0005506">
    <property type="term" value="F:iron ion binding"/>
    <property type="evidence" value="ECO:0007669"/>
    <property type="project" value="InterPro"/>
</dbReference>
<dbReference type="GO" id="GO:0004497">
    <property type="term" value="F:monooxygenase activity"/>
    <property type="evidence" value="ECO:0000304"/>
    <property type="project" value="Reactome"/>
</dbReference>
<dbReference type="GO" id="GO:0016712">
    <property type="term" value="F:oxidoreductase activity, acting on paired donors, with incorporation or reduction of molecular oxygen, reduced flavin or flavoprotein as one donor, and incorporation of one atom of oxygen"/>
    <property type="evidence" value="ECO:0000314"/>
    <property type="project" value="UniProtKB"/>
</dbReference>
<dbReference type="GO" id="GO:0019825">
    <property type="term" value="F:oxygen binding"/>
    <property type="evidence" value="ECO:0000304"/>
    <property type="project" value="ProtInc"/>
</dbReference>
<dbReference type="GO" id="GO:0019373">
    <property type="term" value="P:epoxygenase P450 pathway"/>
    <property type="evidence" value="ECO:0000318"/>
    <property type="project" value="GO_Central"/>
</dbReference>
<dbReference type="GO" id="GO:1901170">
    <property type="term" value="P:naphthalene catabolic process"/>
    <property type="evidence" value="ECO:0000314"/>
    <property type="project" value="UniProtKB"/>
</dbReference>
<dbReference type="GO" id="GO:0009636">
    <property type="term" value="P:response to toxic substance"/>
    <property type="evidence" value="ECO:0007669"/>
    <property type="project" value="Ensembl"/>
</dbReference>
<dbReference type="GO" id="GO:0006805">
    <property type="term" value="P:xenobiotic metabolic process"/>
    <property type="evidence" value="ECO:0000318"/>
    <property type="project" value="GO_Central"/>
</dbReference>
<dbReference type="CDD" id="cd20669">
    <property type="entry name" value="Cyp2F"/>
    <property type="match status" value="1"/>
</dbReference>
<dbReference type="FunFam" id="1.10.630.10:FF:000001">
    <property type="entry name" value="Cytochrome P450, family 2"/>
    <property type="match status" value="1"/>
</dbReference>
<dbReference type="Gene3D" id="1.10.630.10">
    <property type="entry name" value="Cytochrome P450"/>
    <property type="match status" value="1"/>
</dbReference>
<dbReference type="InterPro" id="IPR001128">
    <property type="entry name" value="Cyt_P450"/>
</dbReference>
<dbReference type="InterPro" id="IPR017972">
    <property type="entry name" value="Cyt_P450_CS"/>
</dbReference>
<dbReference type="InterPro" id="IPR020469">
    <property type="entry name" value="Cyt_P450_CYP2_fam"/>
</dbReference>
<dbReference type="InterPro" id="IPR002401">
    <property type="entry name" value="Cyt_P450_E_grp-I"/>
</dbReference>
<dbReference type="InterPro" id="IPR036396">
    <property type="entry name" value="Cyt_P450_sf"/>
</dbReference>
<dbReference type="InterPro" id="IPR050182">
    <property type="entry name" value="Cytochrome_P450_fam2"/>
</dbReference>
<dbReference type="PANTHER" id="PTHR24300:SF275">
    <property type="entry name" value="CYTOCHROME P450 2F1"/>
    <property type="match status" value="1"/>
</dbReference>
<dbReference type="PANTHER" id="PTHR24300">
    <property type="entry name" value="CYTOCHROME P450 508A4-RELATED"/>
    <property type="match status" value="1"/>
</dbReference>
<dbReference type="Pfam" id="PF00067">
    <property type="entry name" value="p450"/>
    <property type="match status" value="1"/>
</dbReference>
<dbReference type="PRINTS" id="PR00463">
    <property type="entry name" value="EP450I"/>
</dbReference>
<dbReference type="PRINTS" id="PR01957">
    <property type="entry name" value="EP450ICYP2F"/>
</dbReference>
<dbReference type="PRINTS" id="PR00385">
    <property type="entry name" value="P450"/>
</dbReference>
<dbReference type="SUPFAM" id="SSF48264">
    <property type="entry name" value="Cytochrome P450"/>
    <property type="match status" value="1"/>
</dbReference>
<dbReference type="PROSITE" id="PS00086">
    <property type="entry name" value="CYTOCHROME_P450"/>
    <property type="match status" value="1"/>
</dbReference>
<keyword id="KW-0025">Alternative splicing</keyword>
<keyword id="KW-0256">Endoplasmic reticulum</keyword>
<keyword id="KW-0349">Heme</keyword>
<keyword id="KW-0408">Iron</keyword>
<keyword id="KW-0472">Membrane</keyword>
<keyword id="KW-0479">Metal-binding</keyword>
<keyword id="KW-0492">Microsome</keyword>
<keyword id="KW-0503">Monooxygenase</keyword>
<keyword id="KW-0560">Oxidoreductase</keyword>
<keyword id="KW-1185">Reference proteome</keyword>
<evidence type="ECO:0000250" key="1"/>
<evidence type="ECO:0000269" key="2">
    <source>
    </source>
</evidence>
<evidence type="ECO:0000269" key="3">
    <source>
    </source>
</evidence>
<evidence type="ECO:0000269" key="4">
    <source>
    </source>
</evidence>
<evidence type="ECO:0000269" key="5">
    <source>
    </source>
</evidence>
<evidence type="ECO:0000269" key="6">
    <source>
    </source>
</evidence>
<evidence type="ECO:0000303" key="7">
    <source>
    </source>
</evidence>
<evidence type="ECO:0000305" key="8"/>
<evidence type="ECO:0000305" key="9">
    <source>
    </source>
</evidence>
<sequence length="491" mass="55501">MDSISTAILLLLLALVCLLLTLSSRDKGKLPPGPRPLSILGNLLLLCSQDMLTSLTKLSKEYGSMYTVHLGPRRVVVLSGYQAVKEALVDQGEEFSGRGDYPAFFNFTKGNGIAFSSGDRWKVLRQFSIQILRNFGMGKRSIEERILEEGSFLLAELRKTEGEPFDPTFVLSRSVSNIICSVLFGSRFDYDDERLLTIIRLINDNFQIMSSPWGELYDIFPSLLDWVPGPHQRIFQNFKCLRDLIAHSVHDHQASLDPRSPRDFIQCFLTKMAEEKEDPLSHFHMDTLLMTTHNLLFGGTKTVSTTLHHAFLALMKYPKVQARVQEEIDLVVGRARLPALKDRAAMPYTDAVIHEVQRFADIIPMNLPHRVTRDTAFRGFLIPKGTDVITLLNTVHYDPSQFLTPQEFNPEHFLDANQSFKKSPAFMPFSAGRRLCLGESLARMELFLYLTAILQSFSLQPLGAPEDIDLTPLSSGLGNLPRPFQLCLRPR</sequence>
<accession>P24903</accession>
<accession>A7KAU6</accession>
<accession>A7KAU7</accession>
<accession>A7KAU8</accession>
<accession>A7KAU9</accession>
<accession>A7KAV0</accession>
<accession>Q32MN5</accession>
<accession>Q8WWJ2</accession>
<proteinExistence type="evidence at protein level"/>